<gene>
    <name evidence="1" type="primary">znuC</name>
    <name type="ordered locus">VV1_0152</name>
</gene>
<sequence length="261" mass="28886">MSALISLKALSVTFDDKKVLDSISLDLHKGKITTLIGPNGAGKSTLVKIIIGLLKPTSGQVQRQAKLTIGYVPQKLKLNDTLPLNVIRFLNLSGKYSQQETMEALRLVGAEHLYKSNMHKLSGGETQRVLLARALLQRPDLLVLDEPAQGVDIQGQIDLYDLIESIRHRFDCAVFMVSHDLHLVMAKTDEVICLQHHVCCSGAPEDITQHPSYIALFGSAARDSLAIYHHQHDHHHHDLAGQPVSGDATQCNHHHHGHHHD</sequence>
<proteinExistence type="inferred from homology"/>
<feature type="chain" id="PRO_0000281563" description="Zinc import ATP-binding protein ZnuC">
    <location>
        <begin position="1"/>
        <end position="261"/>
    </location>
</feature>
<feature type="domain" description="ABC transporter" evidence="1">
    <location>
        <begin position="5"/>
        <end position="220"/>
    </location>
</feature>
<feature type="region of interest" description="Disordered" evidence="2">
    <location>
        <begin position="236"/>
        <end position="261"/>
    </location>
</feature>
<feature type="compositionally biased region" description="Basic residues" evidence="2">
    <location>
        <begin position="252"/>
        <end position="261"/>
    </location>
</feature>
<feature type="binding site" evidence="1">
    <location>
        <begin position="37"/>
        <end position="44"/>
    </location>
    <ligand>
        <name>ATP</name>
        <dbReference type="ChEBI" id="CHEBI:30616"/>
    </ligand>
</feature>
<keyword id="KW-0067">ATP-binding</keyword>
<keyword id="KW-0997">Cell inner membrane</keyword>
<keyword id="KW-1003">Cell membrane</keyword>
<keyword id="KW-0406">Ion transport</keyword>
<keyword id="KW-0472">Membrane</keyword>
<keyword id="KW-0547">Nucleotide-binding</keyword>
<keyword id="KW-1278">Translocase</keyword>
<keyword id="KW-0813">Transport</keyword>
<keyword id="KW-0862">Zinc</keyword>
<keyword id="KW-0864">Zinc transport</keyword>
<evidence type="ECO:0000255" key="1">
    <source>
        <dbReference type="HAMAP-Rule" id="MF_01725"/>
    </source>
</evidence>
<evidence type="ECO:0000256" key="2">
    <source>
        <dbReference type="SAM" id="MobiDB-lite"/>
    </source>
</evidence>
<name>ZNUC_VIBVU</name>
<reference key="1">
    <citation type="submission" date="2002-12" db="EMBL/GenBank/DDBJ databases">
        <title>Complete genome sequence of Vibrio vulnificus CMCP6.</title>
        <authorList>
            <person name="Rhee J.H."/>
            <person name="Kim S.Y."/>
            <person name="Chung S.S."/>
            <person name="Kim J.J."/>
            <person name="Moon Y.H."/>
            <person name="Jeong H."/>
            <person name="Choy H.E."/>
        </authorList>
    </citation>
    <scope>NUCLEOTIDE SEQUENCE [LARGE SCALE GENOMIC DNA]</scope>
    <source>
        <strain>CMCP6</strain>
    </source>
</reference>
<organism>
    <name type="scientific">Vibrio vulnificus (strain CMCP6)</name>
    <dbReference type="NCBI Taxonomy" id="216895"/>
    <lineage>
        <taxon>Bacteria</taxon>
        <taxon>Pseudomonadati</taxon>
        <taxon>Pseudomonadota</taxon>
        <taxon>Gammaproteobacteria</taxon>
        <taxon>Vibrionales</taxon>
        <taxon>Vibrionaceae</taxon>
        <taxon>Vibrio</taxon>
    </lineage>
</organism>
<comment type="function">
    <text evidence="1">Part of the ABC transporter complex ZnuABC involved in zinc import. Responsible for energy coupling to the transport system.</text>
</comment>
<comment type="catalytic activity">
    <reaction evidence="1">
        <text>Zn(2+)(out) + ATP(in) + H2O(in) = Zn(2+)(in) + ADP(in) + phosphate(in) + H(+)(in)</text>
        <dbReference type="Rhea" id="RHEA:29795"/>
        <dbReference type="ChEBI" id="CHEBI:15377"/>
        <dbReference type="ChEBI" id="CHEBI:15378"/>
        <dbReference type="ChEBI" id="CHEBI:29105"/>
        <dbReference type="ChEBI" id="CHEBI:30616"/>
        <dbReference type="ChEBI" id="CHEBI:43474"/>
        <dbReference type="ChEBI" id="CHEBI:456216"/>
        <dbReference type="EC" id="7.2.2.20"/>
    </reaction>
</comment>
<comment type="subunit">
    <text evidence="1">The complex is composed of two ATP-binding proteins (ZnuC), two transmembrane proteins (ZnuB) and a solute-binding protein (ZnuA).</text>
</comment>
<comment type="subcellular location">
    <subcellularLocation>
        <location evidence="1">Cell inner membrane</location>
        <topology evidence="1">Peripheral membrane protein</topology>
    </subcellularLocation>
</comment>
<comment type="similarity">
    <text evidence="1">Belongs to the ABC transporter superfamily. Zinc importer (TC 3.A.1.15.5) family.</text>
</comment>
<dbReference type="EC" id="7.2.2.20" evidence="1"/>
<dbReference type="EMBL" id="AE016795">
    <property type="protein sequence ID" value="AAO08690.1"/>
    <property type="molecule type" value="Genomic_DNA"/>
</dbReference>
<dbReference type="RefSeq" id="WP_011078269.1">
    <property type="nucleotide sequence ID" value="NC_004459.3"/>
</dbReference>
<dbReference type="SMR" id="Q8DFQ4"/>
<dbReference type="KEGG" id="vvu:VV1_0152"/>
<dbReference type="HOGENOM" id="CLU_000604_1_11_6"/>
<dbReference type="Proteomes" id="UP000002275">
    <property type="component" value="Chromosome 1"/>
</dbReference>
<dbReference type="GO" id="GO:0005886">
    <property type="term" value="C:plasma membrane"/>
    <property type="evidence" value="ECO:0007669"/>
    <property type="project" value="UniProtKB-SubCell"/>
</dbReference>
<dbReference type="GO" id="GO:0015633">
    <property type="term" value="F:ABC-type zinc transporter activity"/>
    <property type="evidence" value="ECO:0007669"/>
    <property type="project" value="UniProtKB-EC"/>
</dbReference>
<dbReference type="GO" id="GO:0005524">
    <property type="term" value="F:ATP binding"/>
    <property type="evidence" value="ECO:0007669"/>
    <property type="project" value="UniProtKB-KW"/>
</dbReference>
<dbReference type="GO" id="GO:0016887">
    <property type="term" value="F:ATP hydrolysis activity"/>
    <property type="evidence" value="ECO:0007669"/>
    <property type="project" value="InterPro"/>
</dbReference>
<dbReference type="GO" id="GO:0010043">
    <property type="term" value="P:response to zinc ion"/>
    <property type="evidence" value="ECO:0007669"/>
    <property type="project" value="TreeGrafter"/>
</dbReference>
<dbReference type="FunFam" id="3.40.50.300:FF:000392">
    <property type="entry name" value="Zinc import ATP-binding protein ZnuC"/>
    <property type="match status" value="1"/>
</dbReference>
<dbReference type="Gene3D" id="3.40.50.300">
    <property type="entry name" value="P-loop containing nucleotide triphosphate hydrolases"/>
    <property type="match status" value="1"/>
</dbReference>
<dbReference type="InterPro" id="IPR003593">
    <property type="entry name" value="AAA+_ATPase"/>
</dbReference>
<dbReference type="InterPro" id="IPR003439">
    <property type="entry name" value="ABC_transporter-like_ATP-bd"/>
</dbReference>
<dbReference type="InterPro" id="IPR050153">
    <property type="entry name" value="Metal_Ion_Import_ABC"/>
</dbReference>
<dbReference type="InterPro" id="IPR027417">
    <property type="entry name" value="P-loop_NTPase"/>
</dbReference>
<dbReference type="NCBIfam" id="NF007090">
    <property type="entry name" value="PRK09544.1"/>
    <property type="match status" value="1"/>
</dbReference>
<dbReference type="PANTHER" id="PTHR42734">
    <property type="entry name" value="METAL TRANSPORT SYSTEM ATP-BINDING PROTEIN TM_0124-RELATED"/>
    <property type="match status" value="1"/>
</dbReference>
<dbReference type="PANTHER" id="PTHR42734:SF9">
    <property type="entry name" value="ZINC IMPORT ATP-BINDING PROTEIN ZNUC"/>
    <property type="match status" value="1"/>
</dbReference>
<dbReference type="Pfam" id="PF00005">
    <property type="entry name" value="ABC_tran"/>
    <property type="match status" value="1"/>
</dbReference>
<dbReference type="SMART" id="SM00382">
    <property type="entry name" value="AAA"/>
    <property type="match status" value="1"/>
</dbReference>
<dbReference type="SUPFAM" id="SSF52540">
    <property type="entry name" value="P-loop containing nucleoside triphosphate hydrolases"/>
    <property type="match status" value="1"/>
</dbReference>
<dbReference type="PROSITE" id="PS50893">
    <property type="entry name" value="ABC_TRANSPORTER_2"/>
    <property type="match status" value="1"/>
</dbReference>
<dbReference type="PROSITE" id="PS51298">
    <property type="entry name" value="ZNUC"/>
    <property type="match status" value="1"/>
</dbReference>
<accession>Q8DFQ4</accession>
<protein>
    <recommendedName>
        <fullName evidence="1">Zinc import ATP-binding protein ZnuC</fullName>
        <ecNumber evidence="1">7.2.2.20</ecNumber>
    </recommendedName>
</protein>